<comment type="function">
    <text evidence="1">Transcription regulator that can specifically activate or repress expression of target genes.</text>
</comment>
<comment type="subunit">
    <text evidence="1">Homodimer.</text>
</comment>
<comment type="similarity">
    <text evidence="1">Belongs to the SlyA family.</text>
</comment>
<keyword id="KW-0010">Activator</keyword>
<keyword id="KW-0238">DNA-binding</keyword>
<keyword id="KW-0678">Repressor</keyword>
<keyword id="KW-0804">Transcription</keyword>
<keyword id="KW-0805">Transcription regulation</keyword>
<evidence type="ECO:0000255" key="1">
    <source>
        <dbReference type="HAMAP-Rule" id="MF_01819"/>
    </source>
</evidence>
<name>SLYA_SODGM</name>
<dbReference type="EMBL" id="AP008232">
    <property type="protein sequence ID" value="BAE74718.1"/>
    <property type="molecule type" value="Genomic_DNA"/>
</dbReference>
<dbReference type="RefSeq" id="WP_011411263.1">
    <property type="nucleotide sequence ID" value="NC_007712.1"/>
</dbReference>
<dbReference type="SMR" id="Q2NT07"/>
<dbReference type="STRING" id="343509.SG1443"/>
<dbReference type="KEGG" id="sgl:SG1443"/>
<dbReference type="eggNOG" id="COG1846">
    <property type="taxonomic scope" value="Bacteria"/>
</dbReference>
<dbReference type="HOGENOM" id="CLU_083287_18_2_6"/>
<dbReference type="OrthoDB" id="5296557at2"/>
<dbReference type="Proteomes" id="UP000001932">
    <property type="component" value="Chromosome"/>
</dbReference>
<dbReference type="GO" id="GO:0003677">
    <property type="term" value="F:DNA binding"/>
    <property type="evidence" value="ECO:0007669"/>
    <property type="project" value="UniProtKB-UniRule"/>
</dbReference>
<dbReference type="GO" id="GO:0003700">
    <property type="term" value="F:DNA-binding transcription factor activity"/>
    <property type="evidence" value="ECO:0007669"/>
    <property type="project" value="UniProtKB-UniRule"/>
</dbReference>
<dbReference type="FunFam" id="1.10.10.10:FF:000261">
    <property type="entry name" value="Transcriptional regulator SlyA"/>
    <property type="match status" value="1"/>
</dbReference>
<dbReference type="Gene3D" id="1.10.10.10">
    <property type="entry name" value="Winged helix-like DNA-binding domain superfamily/Winged helix DNA-binding domain"/>
    <property type="match status" value="1"/>
</dbReference>
<dbReference type="HAMAP" id="MF_01819">
    <property type="entry name" value="HTH_type_SlyA"/>
    <property type="match status" value="1"/>
</dbReference>
<dbReference type="InterPro" id="IPR000835">
    <property type="entry name" value="HTH_MarR-typ"/>
</dbReference>
<dbReference type="InterPro" id="IPR023187">
    <property type="entry name" value="Tscrpt_reg_MarR-type_CS"/>
</dbReference>
<dbReference type="InterPro" id="IPR023071">
    <property type="entry name" value="Tscrpt_reg_SlyA"/>
</dbReference>
<dbReference type="InterPro" id="IPR036388">
    <property type="entry name" value="WH-like_DNA-bd_sf"/>
</dbReference>
<dbReference type="InterPro" id="IPR036390">
    <property type="entry name" value="WH_DNA-bd_sf"/>
</dbReference>
<dbReference type="NCBIfam" id="NF002926">
    <property type="entry name" value="PRK03573.1"/>
    <property type="match status" value="1"/>
</dbReference>
<dbReference type="PANTHER" id="PTHR42756">
    <property type="entry name" value="TRANSCRIPTIONAL REGULATOR, MARR"/>
    <property type="match status" value="1"/>
</dbReference>
<dbReference type="PANTHER" id="PTHR42756:SF1">
    <property type="entry name" value="TRANSCRIPTIONAL REPRESSOR OF EMRAB OPERON"/>
    <property type="match status" value="1"/>
</dbReference>
<dbReference type="Pfam" id="PF01047">
    <property type="entry name" value="MarR"/>
    <property type="match status" value="1"/>
</dbReference>
<dbReference type="PRINTS" id="PR00598">
    <property type="entry name" value="HTHMARR"/>
</dbReference>
<dbReference type="SMART" id="SM00347">
    <property type="entry name" value="HTH_MARR"/>
    <property type="match status" value="1"/>
</dbReference>
<dbReference type="SUPFAM" id="SSF46785">
    <property type="entry name" value="Winged helix' DNA-binding domain"/>
    <property type="match status" value="1"/>
</dbReference>
<dbReference type="PROSITE" id="PS01117">
    <property type="entry name" value="HTH_MARR_1"/>
    <property type="match status" value="1"/>
</dbReference>
<dbReference type="PROSITE" id="PS50995">
    <property type="entry name" value="HTH_MARR_2"/>
    <property type="match status" value="1"/>
</dbReference>
<proteinExistence type="inferred from homology"/>
<reference key="1">
    <citation type="journal article" date="2006" name="Genome Res.">
        <title>Massive genome erosion and functional adaptations provide insights into the symbiotic lifestyle of Sodalis glossinidius in the tsetse host.</title>
        <authorList>
            <person name="Toh H."/>
            <person name="Weiss B.L."/>
            <person name="Perkin S.A.H."/>
            <person name="Yamashita A."/>
            <person name="Oshima K."/>
            <person name="Hattori M."/>
            <person name="Aksoy S."/>
        </authorList>
    </citation>
    <scope>NUCLEOTIDE SEQUENCE [LARGE SCALE GENOMIC DNA]</scope>
    <source>
        <strain>morsitans</strain>
    </source>
</reference>
<protein>
    <recommendedName>
        <fullName evidence="1">Transcriptional regulator SlyA</fullName>
    </recommendedName>
</protein>
<feature type="chain" id="PRO_1000070356" description="Transcriptional regulator SlyA">
    <location>
        <begin position="1"/>
        <end position="144"/>
    </location>
</feature>
<feature type="domain" description="HTH marR-type" evidence="1">
    <location>
        <begin position="2"/>
        <end position="135"/>
    </location>
</feature>
<feature type="DNA-binding region" description="H-T-H motif" evidence="1">
    <location>
        <begin position="49"/>
        <end position="72"/>
    </location>
</feature>
<accession>Q2NT07</accession>
<sequence>MESPLGSDLARLVRVWRALIDHRLKPLELTQTHWITLHNICQLPPEQSQIQLAKAIGIEQPSLVRTLDQLEEKGLITRHTCANDRRAKRIKLTESAEPIIKEVNNVIDSTRNEILNGISQEEIQLLSNMIAKLEKNILELYNKS</sequence>
<organism>
    <name type="scientific">Sodalis glossinidius (strain morsitans)</name>
    <dbReference type="NCBI Taxonomy" id="343509"/>
    <lineage>
        <taxon>Bacteria</taxon>
        <taxon>Pseudomonadati</taxon>
        <taxon>Pseudomonadota</taxon>
        <taxon>Gammaproteobacteria</taxon>
        <taxon>Enterobacterales</taxon>
        <taxon>Bruguierivoracaceae</taxon>
        <taxon>Sodalis</taxon>
    </lineage>
</organism>
<gene>
    <name evidence="1" type="primary">slyA</name>
    <name type="ordered locus">SG1443</name>
</gene>